<organism>
    <name type="scientific">Corynebacterium efficiens (strain DSM 44549 / YS-314 / AJ 12310 / JCM 11189 / NBRC 100395)</name>
    <dbReference type="NCBI Taxonomy" id="196164"/>
    <lineage>
        <taxon>Bacteria</taxon>
        <taxon>Bacillati</taxon>
        <taxon>Actinomycetota</taxon>
        <taxon>Actinomycetes</taxon>
        <taxon>Mycobacteriales</taxon>
        <taxon>Corynebacteriaceae</taxon>
        <taxon>Corynebacterium</taxon>
    </lineage>
</organism>
<gene>
    <name evidence="1" type="primary">leuA</name>
    <name type="ordered locus">CE0216</name>
</gene>
<keyword id="KW-0028">Amino-acid biosynthesis</keyword>
<keyword id="KW-0100">Branched-chain amino acid biosynthesis</keyword>
<keyword id="KW-0963">Cytoplasm</keyword>
<keyword id="KW-0432">Leucine biosynthesis</keyword>
<keyword id="KW-0460">Magnesium</keyword>
<keyword id="KW-0479">Metal-binding</keyword>
<keyword id="KW-1185">Reference proteome</keyword>
<keyword id="KW-0808">Transferase</keyword>
<dbReference type="EC" id="2.3.3.13" evidence="1"/>
<dbReference type="EMBL" id="BA000035">
    <property type="protein sequence ID" value="BAC17026.1"/>
    <property type="molecule type" value="Genomic_DNA"/>
</dbReference>
<dbReference type="SMR" id="Q8FU05"/>
<dbReference type="STRING" id="196164.gene:10740612"/>
<dbReference type="KEGG" id="cef:CE0216"/>
<dbReference type="eggNOG" id="COG0119">
    <property type="taxonomic scope" value="Bacteria"/>
</dbReference>
<dbReference type="HOGENOM" id="CLU_004588_3_2_11"/>
<dbReference type="OrthoDB" id="9803573at2"/>
<dbReference type="UniPathway" id="UPA00048">
    <property type="reaction ID" value="UER00070"/>
</dbReference>
<dbReference type="Proteomes" id="UP000001409">
    <property type="component" value="Chromosome"/>
</dbReference>
<dbReference type="GO" id="GO:0005737">
    <property type="term" value="C:cytoplasm"/>
    <property type="evidence" value="ECO:0007669"/>
    <property type="project" value="UniProtKB-SubCell"/>
</dbReference>
<dbReference type="GO" id="GO:0003852">
    <property type="term" value="F:2-isopropylmalate synthase activity"/>
    <property type="evidence" value="ECO:0007669"/>
    <property type="project" value="UniProtKB-UniRule"/>
</dbReference>
<dbReference type="GO" id="GO:0003985">
    <property type="term" value="F:acetyl-CoA C-acetyltransferase activity"/>
    <property type="evidence" value="ECO:0007669"/>
    <property type="project" value="UniProtKB-UniRule"/>
</dbReference>
<dbReference type="GO" id="GO:0000287">
    <property type="term" value="F:magnesium ion binding"/>
    <property type="evidence" value="ECO:0007669"/>
    <property type="project" value="UniProtKB-UniRule"/>
</dbReference>
<dbReference type="GO" id="GO:0009098">
    <property type="term" value="P:L-leucine biosynthetic process"/>
    <property type="evidence" value="ECO:0007669"/>
    <property type="project" value="UniProtKB-UniRule"/>
</dbReference>
<dbReference type="CDD" id="cd07942">
    <property type="entry name" value="DRE_TIM_LeuA"/>
    <property type="match status" value="1"/>
</dbReference>
<dbReference type="FunFam" id="3.20.20.70:FF:000045">
    <property type="entry name" value="2-isopropylmalate synthase"/>
    <property type="match status" value="1"/>
</dbReference>
<dbReference type="Gene3D" id="3.30.160.270">
    <property type="match status" value="1"/>
</dbReference>
<dbReference type="Gene3D" id="3.20.20.70">
    <property type="entry name" value="Aldolase class I"/>
    <property type="match status" value="1"/>
</dbReference>
<dbReference type="HAMAP" id="MF_00572">
    <property type="entry name" value="LeuA_type2"/>
    <property type="match status" value="1"/>
</dbReference>
<dbReference type="InterPro" id="IPR013709">
    <property type="entry name" value="2-isopropylmalate_synth_dimer"/>
</dbReference>
<dbReference type="InterPro" id="IPR002034">
    <property type="entry name" value="AIPM/Hcit_synth_CS"/>
</dbReference>
<dbReference type="InterPro" id="IPR013785">
    <property type="entry name" value="Aldolase_TIM"/>
</dbReference>
<dbReference type="InterPro" id="IPR005668">
    <property type="entry name" value="IPM_Synthase"/>
</dbReference>
<dbReference type="InterPro" id="IPR054692">
    <property type="entry name" value="LeuA-like_post-cat"/>
</dbReference>
<dbReference type="InterPro" id="IPR036230">
    <property type="entry name" value="LeuA_allosteric_dom_sf"/>
</dbReference>
<dbReference type="InterPro" id="IPR039371">
    <property type="entry name" value="LeuA_N_DRE-TIM"/>
</dbReference>
<dbReference type="InterPro" id="IPR000891">
    <property type="entry name" value="PYR_CT"/>
</dbReference>
<dbReference type="NCBIfam" id="TIGR00970">
    <property type="entry name" value="leuA_yeast"/>
    <property type="match status" value="1"/>
</dbReference>
<dbReference type="NCBIfam" id="NF002991">
    <property type="entry name" value="PRK03739.1"/>
    <property type="match status" value="1"/>
</dbReference>
<dbReference type="PANTHER" id="PTHR46911">
    <property type="match status" value="1"/>
</dbReference>
<dbReference type="PANTHER" id="PTHR46911:SF1">
    <property type="entry name" value="2-ISOPROPYLMALATE SYNTHASE"/>
    <property type="match status" value="1"/>
</dbReference>
<dbReference type="Pfam" id="PF00682">
    <property type="entry name" value="HMGL-like"/>
    <property type="match status" value="1"/>
</dbReference>
<dbReference type="Pfam" id="PF22615">
    <property type="entry name" value="IPMS_D2"/>
    <property type="match status" value="1"/>
</dbReference>
<dbReference type="Pfam" id="PF08502">
    <property type="entry name" value="LeuA_dimer"/>
    <property type="match status" value="1"/>
</dbReference>
<dbReference type="SMART" id="SM00917">
    <property type="entry name" value="LeuA_dimer"/>
    <property type="match status" value="1"/>
</dbReference>
<dbReference type="SUPFAM" id="SSF110921">
    <property type="entry name" value="2-isopropylmalate synthase LeuA, allosteric (dimerisation) domain"/>
    <property type="match status" value="1"/>
</dbReference>
<dbReference type="SUPFAM" id="SSF51569">
    <property type="entry name" value="Aldolase"/>
    <property type="match status" value="1"/>
</dbReference>
<dbReference type="SUPFAM" id="SSF89000">
    <property type="entry name" value="post-HMGL domain-like"/>
    <property type="match status" value="1"/>
</dbReference>
<dbReference type="PROSITE" id="PS00815">
    <property type="entry name" value="AIPM_HOMOCIT_SYNTH_1"/>
    <property type="match status" value="1"/>
</dbReference>
<dbReference type="PROSITE" id="PS00816">
    <property type="entry name" value="AIPM_HOMOCIT_SYNTH_2"/>
    <property type="match status" value="1"/>
</dbReference>
<dbReference type="PROSITE" id="PS50991">
    <property type="entry name" value="PYR_CT"/>
    <property type="match status" value="1"/>
</dbReference>
<reference key="1">
    <citation type="journal article" date="2003" name="Genome Res.">
        <title>Comparative complete genome sequence analysis of the amino acid replacements responsible for the thermostability of Corynebacterium efficiens.</title>
        <authorList>
            <person name="Nishio Y."/>
            <person name="Nakamura Y."/>
            <person name="Kawarabayasi Y."/>
            <person name="Usuda Y."/>
            <person name="Kimura E."/>
            <person name="Sugimoto S."/>
            <person name="Matsui K."/>
            <person name="Yamagishi A."/>
            <person name="Kikuchi H."/>
            <person name="Ikeo K."/>
            <person name="Gojobori T."/>
        </authorList>
    </citation>
    <scope>NUCLEOTIDE SEQUENCE [LARGE SCALE GENOMIC DNA]</scope>
    <source>
        <strain>DSM 44549 / YS-314 / AJ 12310 / JCM 11189 / NBRC 100395</strain>
    </source>
</reference>
<protein>
    <recommendedName>
        <fullName evidence="1">2-isopropylmalate synthase</fullName>
        <ecNumber evidence="1">2.3.3.13</ecNumber>
    </recommendedName>
    <alternativeName>
        <fullName evidence="1">Alpha-IPM synthase</fullName>
    </alternativeName>
    <alternativeName>
        <fullName evidence="1">Alpha-isopropylmalate synthase</fullName>
    </alternativeName>
</protein>
<sequence>MPVKRYLPFEVEVEDITLPDRTWPDKKITQAPQWCAVDLRDGNQALIDPMSPERKRRMFELLVKMGFKEIEVGFPSASQTDFDFVREIIEKNMIPDDVTIQVLVQAREHLIRRTFEACEGAKNVIVHFYNSTSILQRDVVFRMNKDQVKTLATDAAELIKTIAQDYPDTNWRWEYSPESYTGTEVEYAKEVVDAVVEVMDPTPENPIIINLPATVEMITPNVYADSIEWMHRNLNRRDSIILSLHPHNDRGTGVAAAELGYMAGADRIEGCLFGNGERTGNVCLVTLALNMLTQGVDPQLDFSDIKHIRRTVEYCNQLRVPERHPYGGDLVFTAFSGSHQDAINKGLDALAAKVKPGASSTEVAWEELRSTEWEVPYLPIDPKDVGRDYEAVIRVNSQSGKGGVAYIMKTDHGLKMPRSMQVEFSAVVQNVTDAEGGEVNSKEMWDIFATEYLDRSAPVEQIALRVENAQTENDDATITAELVVDGENQTVSGRGNGPLAAYANALESLNIDVEIQEYSQHARTSGDDAEAAAYVLAEVNGRMVWGVGIAGSITYASLKAVTSAVNRALDFKHQQLQNGGV</sequence>
<comment type="function">
    <text evidence="1">Catalyzes the condensation of the acetyl group of acetyl-CoA with 3-methyl-2-oxobutanoate (2-ketoisovalerate) to form 3-carboxy-3-hydroxy-4-methylpentanoate (2-isopropylmalate).</text>
</comment>
<comment type="catalytic activity">
    <reaction evidence="1">
        <text>3-methyl-2-oxobutanoate + acetyl-CoA + H2O = (2S)-2-isopropylmalate + CoA + H(+)</text>
        <dbReference type="Rhea" id="RHEA:21524"/>
        <dbReference type="ChEBI" id="CHEBI:1178"/>
        <dbReference type="ChEBI" id="CHEBI:11851"/>
        <dbReference type="ChEBI" id="CHEBI:15377"/>
        <dbReference type="ChEBI" id="CHEBI:15378"/>
        <dbReference type="ChEBI" id="CHEBI:57287"/>
        <dbReference type="ChEBI" id="CHEBI:57288"/>
        <dbReference type="EC" id="2.3.3.13"/>
    </reaction>
</comment>
<comment type="cofactor">
    <cofactor evidence="1">
        <name>Mg(2+)</name>
        <dbReference type="ChEBI" id="CHEBI:18420"/>
    </cofactor>
</comment>
<comment type="pathway">
    <text evidence="1">Amino-acid biosynthesis; L-leucine biosynthesis; L-leucine from 3-methyl-2-oxobutanoate: step 1/4.</text>
</comment>
<comment type="subunit">
    <text evidence="1">Homodimer.</text>
</comment>
<comment type="subcellular location">
    <subcellularLocation>
        <location evidence="1">Cytoplasm</location>
    </subcellularLocation>
</comment>
<comment type="similarity">
    <text evidence="1">Belongs to the alpha-IPM synthase/homocitrate synthase family. LeuA type 2 subfamily.</text>
</comment>
<evidence type="ECO:0000255" key="1">
    <source>
        <dbReference type="HAMAP-Rule" id="MF_00572"/>
    </source>
</evidence>
<proteinExistence type="inferred from homology"/>
<feature type="chain" id="PRO_0000140431" description="2-isopropylmalate synthase">
    <location>
        <begin position="1"/>
        <end position="581"/>
    </location>
</feature>
<feature type="domain" description="Pyruvate carboxyltransferase" evidence="1">
    <location>
        <begin position="32"/>
        <end position="306"/>
    </location>
</feature>
<feature type="region of interest" description="Regulatory domain" evidence="1">
    <location>
        <begin position="455"/>
        <end position="581"/>
    </location>
</feature>
<feature type="binding site" evidence="1">
    <location>
        <position position="41"/>
    </location>
    <ligand>
        <name>Mg(2+)</name>
        <dbReference type="ChEBI" id="CHEBI:18420"/>
    </ligand>
</feature>
<feature type="binding site" evidence="1">
    <location>
        <position position="245"/>
    </location>
    <ligand>
        <name>Mg(2+)</name>
        <dbReference type="ChEBI" id="CHEBI:18420"/>
    </ligand>
</feature>
<feature type="binding site" evidence="1">
    <location>
        <position position="247"/>
    </location>
    <ligand>
        <name>Mg(2+)</name>
        <dbReference type="ChEBI" id="CHEBI:18420"/>
    </ligand>
</feature>
<feature type="binding site" evidence="1">
    <location>
        <position position="281"/>
    </location>
    <ligand>
        <name>Mg(2+)</name>
        <dbReference type="ChEBI" id="CHEBI:18420"/>
    </ligand>
</feature>
<accession>Q8FU05</accession>
<name>LEU1_COREF</name>